<organism>
    <name type="scientific">Synechococcus sp. (strain CC9902)</name>
    <dbReference type="NCBI Taxonomy" id="316279"/>
    <lineage>
        <taxon>Bacteria</taxon>
        <taxon>Bacillati</taxon>
        <taxon>Cyanobacteriota</taxon>
        <taxon>Cyanophyceae</taxon>
        <taxon>Synechococcales</taxon>
        <taxon>Synechococcaceae</taxon>
        <taxon>Synechococcus</taxon>
    </lineage>
</organism>
<protein>
    <recommendedName>
        <fullName evidence="1">Photosystem I assembly protein Ycf3</fullName>
    </recommendedName>
</protein>
<comment type="function">
    <text evidence="1">Essential for the assembly of the photosystem I (PSI) complex. May act as a chaperone-like factor to guide the assembly of the PSI subunits.</text>
</comment>
<comment type="subcellular location">
    <subcellularLocation>
        <location evidence="1">Cellular thylakoid membrane</location>
        <topology evidence="1">Peripheral membrane protein</topology>
    </subcellularLocation>
</comment>
<comment type="similarity">
    <text evidence="1">Belongs to the Ycf3 family.</text>
</comment>
<comment type="sequence caution" evidence="2">
    <conflict type="erroneous initiation">
        <sequence resource="EMBL-CDS" id="ABB25283"/>
    </conflict>
</comment>
<reference key="1">
    <citation type="submission" date="2005-08" db="EMBL/GenBank/DDBJ databases">
        <title>Complete sequence of Synechococcus sp. CC9902.</title>
        <authorList>
            <person name="Copeland A."/>
            <person name="Lucas S."/>
            <person name="Lapidus A."/>
            <person name="Barry K."/>
            <person name="Detter J.C."/>
            <person name="Glavina T."/>
            <person name="Hammon N."/>
            <person name="Israni S."/>
            <person name="Pitluck S."/>
            <person name="Martinez M."/>
            <person name="Schmutz J."/>
            <person name="Larimer F."/>
            <person name="Land M."/>
            <person name="Kyrpides N."/>
            <person name="Ivanova N."/>
            <person name="Richardson P."/>
        </authorList>
    </citation>
    <scope>NUCLEOTIDE SEQUENCE [LARGE SCALE GENOMIC DNA]</scope>
    <source>
        <strain>CC9902</strain>
    </source>
</reference>
<name>YCF3_SYNS9</name>
<proteinExistence type="inferred from homology"/>
<feature type="chain" id="PRO_0000325047" description="Photosystem I assembly protein Ycf3">
    <location>
        <begin position="1"/>
        <end position="173"/>
    </location>
</feature>
<feature type="repeat" description="TPR 1">
    <location>
        <begin position="35"/>
        <end position="68"/>
    </location>
</feature>
<feature type="repeat" description="TPR 2">
    <location>
        <begin position="72"/>
        <end position="105"/>
    </location>
</feature>
<feature type="repeat" description="TPR 3">
    <location>
        <begin position="120"/>
        <end position="153"/>
    </location>
</feature>
<evidence type="ECO:0000255" key="1">
    <source>
        <dbReference type="HAMAP-Rule" id="MF_00439"/>
    </source>
</evidence>
<evidence type="ECO:0000305" key="2"/>
<gene>
    <name evidence="1" type="primary">ycf3</name>
    <name type="ordered locus">Syncc9902_0310</name>
</gene>
<dbReference type="EMBL" id="CP000097">
    <property type="protein sequence ID" value="ABB25283.1"/>
    <property type="status" value="ALT_INIT"/>
    <property type="molecule type" value="Genomic_DNA"/>
</dbReference>
<dbReference type="SMR" id="Q3B045"/>
<dbReference type="STRING" id="316279.Syncc9902_0310"/>
<dbReference type="KEGG" id="sye:Syncc9902_0310"/>
<dbReference type="eggNOG" id="COG3063">
    <property type="taxonomic scope" value="Bacteria"/>
</dbReference>
<dbReference type="HOGENOM" id="CLU_141248_0_0_3"/>
<dbReference type="OrthoDB" id="9429505at2"/>
<dbReference type="Proteomes" id="UP000002712">
    <property type="component" value="Chromosome"/>
</dbReference>
<dbReference type="GO" id="GO:0031676">
    <property type="term" value="C:plasma membrane-derived thylakoid membrane"/>
    <property type="evidence" value="ECO:0007669"/>
    <property type="project" value="UniProtKB-SubCell"/>
</dbReference>
<dbReference type="GO" id="GO:0015979">
    <property type="term" value="P:photosynthesis"/>
    <property type="evidence" value="ECO:0007669"/>
    <property type="project" value="UniProtKB-UniRule"/>
</dbReference>
<dbReference type="Gene3D" id="1.25.40.10">
    <property type="entry name" value="Tetratricopeptide repeat domain"/>
    <property type="match status" value="1"/>
</dbReference>
<dbReference type="HAMAP" id="MF_00439">
    <property type="entry name" value="Ycf3"/>
    <property type="match status" value="1"/>
</dbReference>
<dbReference type="InterPro" id="IPR022818">
    <property type="entry name" value="PSI_Ycf3_assembly"/>
</dbReference>
<dbReference type="InterPro" id="IPR011990">
    <property type="entry name" value="TPR-like_helical_dom_sf"/>
</dbReference>
<dbReference type="InterPro" id="IPR019734">
    <property type="entry name" value="TPR_rpt"/>
</dbReference>
<dbReference type="InterPro" id="IPR051685">
    <property type="entry name" value="Ycf3/AcsC/BcsC/TPR_MFPF"/>
</dbReference>
<dbReference type="NCBIfam" id="NF002725">
    <property type="entry name" value="PRK02603.1"/>
    <property type="match status" value="1"/>
</dbReference>
<dbReference type="PANTHER" id="PTHR44943">
    <property type="entry name" value="CELLULOSE SYNTHASE OPERON PROTEIN C"/>
    <property type="match status" value="1"/>
</dbReference>
<dbReference type="PANTHER" id="PTHR44943:SF8">
    <property type="entry name" value="TPR REPEAT-CONTAINING PROTEIN MJ0263"/>
    <property type="match status" value="1"/>
</dbReference>
<dbReference type="Pfam" id="PF13424">
    <property type="entry name" value="TPR_12"/>
    <property type="match status" value="1"/>
</dbReference>
<dbReference type="SMART" id="SM00028">
    <property type="entry name" value="TPR"/>
    <property type="match status" value="2"/>
</dbReference>
<dbReference type="SUPFAM" id="SSF48452">
    <property type="entry name" value="TPR-like"/>
    <property type="match status" value="1"/>
</dbReference>
<dbReference type="PROSITE" id="PS50005">
    <property type="entry name" value="TPR"/>
    <property type="match status" value="3"/>
</dbReference>
<dbReference type="PROSITE" id="PS50293">
    <property type="entry name" value="TPR_REGION"/>
    <property type="match status" value="1"/>
</dbReference>
<sequence>MPRSNRNDNFIDKSFTVMADLIVKLLPINARSKEAYVYYRDGLSAQNDGDYAEALENYDEALKLETDPTDRGETLKNMAIIYMSNGEEERAIETYQKALDENPKQPSCLKNMGLIFEKWGRIAEESGQQDDADRWFDQAADVWTQAVRLNPGGYLDIENWLKSTGRSNVDVYF</sequence>
<keyword id="KW-0472">Membrane</keyword>
<keyword id="KW-0602">Photosynthesis</keyword>
<keyword id="KW-1185">Reference proteome</keyword>
<keyword id="KW-0677">Repeat</keyword>
<keyword id="KW-0793">Thylakoid</keyword>
<keyword id="KW-0802">TPR repeat</keyword>
<accession>Q3B045</accession>